<accession>Q58709</accession>
<evidence type="ECO:0000250" key="1">
    <source>
        <dbReference type="UniProtKB" id="Q5JGJ6"/>
    </source>
</evidence>
<evidence type="ECO:0000250" key="2">
    <source>
        <dbReference type="UniProtKB" id="Q9YA51"/>
    </source>
</evidence>
<evidence type="ECO:0000305" key="3"/>
<gene>
    <name type="ordered locus">MJ1313</name>
</gene>
<protein>
    <recommendedName>
        <fullName evidence="2">Phosphomevalonate dehydratase large subunit</fullName>
        <shortName evidence="2">PMDh large subunit</shortName>
        <shortName evidence="2">PMDh-L</shortName>
        <ecNumber evidence="2">4.2.1.182</ecNumber>
    </recommendedName>
</protein>
<comment type="function">
    <text evidence="2">Component of a hydro-lyase that catalyzes the dehydration of mevalonate 5-phosphate (MVA5P) to form trans-anhydromevalonate 5-phosphate (tAHMP) (By similarity). Involved in the archaeal mevalonate (MVA) pathway, which provides fundamental precursors for isoprenoid biosynthesis, such as isopentenyl diphosphate (IPP) and dimethylallyl diphosphate (DMAPP) (By similarity).</text>
</comment>
<comment type="catalytic activity">
    <reaction evidence="2">
        <text>(R)-5-phosphomevalonate = (2E)-3-methyl-5-phosphooxypent-2-enoate + H2O</text>
        <dbReference type="Rhea" id="RHEA:78975"/>
        <dbReference type="ChEBI" id="CHEBI:15377"/>
        <dbReference type="ChEBI" id="CHEBI:58146"/>
        <dbReference type="ChEBI" id="CHEBI:229665"/>
        <dbReference type="EC" id="4.2.1.182"/>
    </reaction>
    <physiologicalReaction direction="left-to-right" evidence="2">
        <dbReference type="Rhea" id="RHEA:78976"/>
    </physiologicalReaction>
</comment>
<comment type="cofactor">
    <cofactor evidence="2">
        <name>[4Fe-4S] cluster</name>
        <dbReference type="ChEBI" id="CHEBI:49883"/>
    </cofactor>
    <text evidence="2">Binds 1 [4Fe-4S] cluster per subunit.</text>
</comment>
<comment type="pathway">
    <text evidence="2">Isoprenoid biosynthesis; isopentenyl diphosphate biosynthesis via mevalonate pathway.</text>
</comment>
<comment type="subunit">
    <text evidence="2">Heterodimer composed of a large subunit (PMDh-L) and a small subunit (PMDh-S).</text>
</comment>
<comment type="similarity">
    <text evidence="3">Belongs to the AcnX type II large subunit family.</text>
</comment>
<feature type="chain" id="PRO_0000107270" description="Phosphomevalonate dehydratase large subunit">
    <location>
        <begin position="1"/>
        <end position="403"/>
    </location>
</feature>
<feature type="binding site" evidence="1">
    <location>
        <position position="48"/>
    </location>
    <ligand>
        <name>(R)-5-phosphomevalonate</name>
        <dbReference type="ChEBI" id="CHEBI:58146"/>
    </ligand>
</feature>
<feature type="binding site" evidence="1">
    <location>
        <position position="49"/>
    </location>
    <ligand>
        <name>(R)-5-phosphomevalonate</name>
        <dbReference type="ChEBI" id="CHEBI:58146"/>
    </ligand>
</feature>
<feature type="binding site" evidence="1">
    <location>
        <position position="50"/>
    </location>
    <ligand>
        <name>(R)-5-phosphomevalonate</name>
        <dbReference type="ChEBI" id="CHEBI:58146"/>
    </ligand>
</feature>
<feature type="binding site" evidence="1">
    <location>
        <position position="79"/>
    </location>
    <ligand>
        <name>(R)-5-phosphomevalonate</name>
        <dbReference type="ChEBI" id="CHEBI:58146"/>
    </ligand>
</feature>
<feature type="binding site" evidence="1">
    <location>
        <position position="80"/>
    </location>
    <ligand>
        <name>(R)-5-phosphomevalonate</name>
        <dbReference type="ChEBI" id="CHEBI:58146"/>
    </ligand>
</feature>
<feature type="binding site" evidence="1">
    <location>
        <position position="119"/>
    </location>
    <ligand>
        <name>[4Fe-4S] cluster</name>
        <dbReference type="ChEBI" id="CHEBI:49883"/>
    </ligand>
</feature>
<feature type="binding site" evidence="1">
    <location>
        <position position="138"/>
    </location>
    <ligand>
        <name>(R)-5-phosphomevalonate</name>
        <dbReference type="ChEBI" id="CHEBI:58146"/>
    </ligand>
</feature>
<feature type="binding site" evidence="1">
    <location>
        <position position="139"/>
    </location>
    <ligand>
        <name>(R)-5-phosphomevalonate</name>
        <dbReference type="ChEBI" id="CHEBI:58146"/>
    </ligand>
</feature>
<feature type="binding site" evidence="1">
    <location>
        <position position="301"/>
    </location>
    <ligand>
        <name>[4Fe-4S] cluster</name>
        <dbReference type="ChEBI" id="CHEBI:49883"/>
    </ligand>
</feature>
<feature type="binding site" evidence="1">
    <location>
        <position position="358"/>
    </location>
    <ligand>
        <name>[4Fe-4S] cluster</name>
        <dbReference type="ChEBI" id="CHEBI:49883"/>
    </ligand>
</feature>
<feature type="binding site" evidence="1">
    <location>
        <position position="378"/>
    </location>
    <ligand>
        <name>(R)-5-phosphomevalonate</name>
        <dbReference type="ChEBI" id="CHEBI:58146"/>
    </ligand>
</feature>
<name>PMDHL_METJA</name>
<organism>
    <name type="scientific">Methanocaldococcus jannaschii (strain ATCC 43067 / DSM 2661 / JAL-1 / JCM 10045 / NBRC 100440)</name>
    <name type="common">Methanococcus jannaschii</name>
    <dbReference type="NCBI Taxonomy" id="243232"/>
    <lineage>
        <taxon>Archaea</taxon>
        <taxon>Methanobacteriati</taxon>
        <taxon>Methanobacteriota</taxon>
        <taxon>Methanomada group</taxon>
        <taxon>Methanococci</taxon>
        <taxon>Methanococcales</taxon>
        <taxon>Methanocaldococcaceae</taxon>
        <taxon>Methanocaldococcus</taxon>
    </lineage>
</organism>
<keyword id="KW-0004">4Fe-4S</keyword>
<keyword id="KW-0408">Iron</keyword>
<keyword id="KW-0411">Iron-sulfur</keyword>
<keyword id="KW-0414">Isoprene biosynthesis</keyword>
<keyword id="KW-0456">Lyase</keyword>
<keyword id="KW-0479">Metal-binding</keyword>
<keyword id="KW-1185">Reference proteome</keyword>
<reference key="1">
    <citation type="journal article" date="1996" name="Science">
        <title>Complete genome sequence of the methanogenic archaeon, Methanococcus jannaschii.</title>
        <authorList>
            <person name="Bult C.J."/>
            <person name="White O."/>
            <person name="Olsen G.J."/>
            <person name="Zhou L."/>
            <person name="Fleischmann R.D."/>
            <person name="Sutton G.G."/>
            <person name="Blake J.A."/>
            <person name="FitzGerald L.M."/>
            <person name="Clayton R.A."/>
            <person name="Gocayne J.D."/>
            <person name="Kerlavage A.R."/>
            <person name="Dougherty B.A."/>
            <person name="Tomb J.-F."/>
            <person name="Adams M.D."/>
            <person name="Reich C.I."/>
            <person name="Overbeek R."/>
            <person name="Kirkness E.F."/>
            <person name="Weinstock K.G."/>
            <person name="Merrick J.M."/>
            <person name="Glodek A."/>
            <person name="Scott J.L."/>
            <person name="Geoghagen N.S.M."/>
            <person name="Weidman J.F."/>
            <person name="Fuhrmann J.L."/>
            <person name="Nguyen D."/>
            <person name="Utterback T.R."/>
            <person name="Kelley J.M."/>
            <person name="Peterson J.D."/>
            <person name="Sadow P.W."/>
            <person name="Hanna M.C."/>
            <person name="Cotton M.D."/>
            <person name="Roberts K.M."/>
            <person name="Hurst M.A."/>
            <person name="Kaine B.P."/>
            <person name="Borodovsky M."/>
            <person name="Klenk H.-P."/>
            <person name="Fraser C.M."/>
            <person name="Smith H.O."/>
            <person name="Woese C.R."/>
            <person name="Venter J.C."/>
        </authorList>
    </citation>
    <scope>NUCLEOTIDE SEQUENCE [LARGE SCALE GENOMIC DNA]</scope>
    <source>
        <strain>ATCC 43067 / DSM 2661 / JAL-1 / JCM 10045 / NBRC 100440</strain>
    </source>
</reference>
<proteinExistence type="inferred from homology"/>
<dbReference type="EC" id="4.2.1.182" evidence="2"/>
<dbReference type="EMBL" id="L77117">
    <property type="protein sequence ID" value="AAB99320.1"/>
    <property type="molecule type" value="Genomic_DNA"/>
</dbReference>
<dbReference type="PIR" id="H64463">
    <property type="entry name" value="H64463"/>
</dbReference>
<dbReference type="RefSeq" id="WP_010870830.1">
    <property type="nucleotide sequence ID" value="NC_000909.1"/>
</dbReference>
<dbReference type="SMR" id="Q58709"/>
<dbReference type="FunCoup" id="Q58709">
    <property type="interactions" value="11"/>
</dbReference>
<dbReference type="STRING" id="243232.MJ_1313"/>
<dbReference type="PaxDb" id="243232-MJ_1313"/>
<dbReference type="EnsemblBacteria" id="AAB99320">
    <property type="protein sequence ID" value="AAB99320"/>
    <property type="gene ID" value="MJ_1313"/>
</dbReference>
<dbReference type="GeneID" id="1452215"/>
<dbReference type="KEGG" id="mja:MJ_1313"/>
<dbReference type="eggNOG" id="arCOG04278">
    <property type="taxonomic scope" value="Archaea"/>
</dbReference>
<dbReference type="HOGENOM" id="CLU_018825_1_0_2"/>
<dbReference type="InParanoid" id="Q58709"/>
<dbReference type="OrthoDB" id="25253at2157"/>
<dbReference type="PhylomeDB" id="Q58709"/>
<dbReference type="UniPathway" id="UPA00057"/>
<dbReference type="Proteomes" id="UP000000805">
    <property type="component" value="Chromosome"/>
</dbReference>
<dbReference type="GO" id="GO:0051539">
    <property type="term" value="F:4 iron, 4 sulfur cluster binding"/>
    <property type="evidence" value="ECO:0007669"/>
    <property type="project" value="UniProtKB-KW"/>
</dbReference>
<dbReference type="GO" id="GO:0016829">
    <property type="term" value="F:lyase activity"/>
    <property type="evidence" value="ECO:0007669"/>
    <property type="project" value="UniProtKB-KW"/>
</dbReference>
<dbReference type="GO" id="GO:0046872">
    <property type="term" value="F:metal ion binding"/>
    <property type="evidence" value="ECO:0007669"/>
    <property type="project" value="UniProtKB-KW"/>
</dbReference>
<dbReference type="GO" id="GO:0008299">
    <property type="term" value="P:isoprenoid biosynthetic process"/>
    <property type="evidence" value="ECO:0007669"/>
    <property type="project" value="UniProtKB-KW"/>
</dbReference>
<dbReference type="CDD" id="cd01355">
    <property type="entry name" value="AcnX"/>
    <property type="match status" value="1"/>
</dbReference>
<dbReference type="InterPro" id="IPR007506">
    <property type="entry name" value="PMDh-L-like_dom"/>
</dbReference>
<dbReference type="PANTHER" id="PTHR36577">
    <property type="entry name" value="DUF521 DOMAIN PROTEIN (AFU_ORTHOLOGUE AFUA_6G00490)"/>
    <property type="match status" value="1"/>
</dbReference>
<dbReference type="PANTHER" id="PTHR36577:SF3">
    <property type="entry name" value="DUF521 DOMAIN PROTEIN (AFU_ORTHOLOGUE AFUA_6G00490)"/>
    <property type="match status" value="1"/>
</dbReference>
<dbReference type="Pfam" id="PF04412">
    <property type="entry name" value="AcnX"/>
    <property type="match status" value="1"/>
</dbReference>
<sequence>MYLTKEEEKILDGEYGEVLRRCMNLLVSLGDIYGADKLIPISSAQISGVSYKTIKDIGLEFLEDFAKEDVKVKVYATLNPAGMDLDIWRELGIDEKFAKKQLRIIEAFKKMEVEISCTCTPYLTGNLPRFGEHISWAESSAVSFANSVLGAKTNREGGPSALAAAIIGKTPYYGYHLDENRKTTHIIELDGQLISNFKYGESFYGALGYLVGKIVKNGIPYFENLYKLNPNNDNLKSLGAAMAASGGIALYHAKNLTAECRVKEVVNDKIEKISIGVEEIKEAYEKLNTTNEEPDLICIGCPHCSLMEIKKIAELLKNKKLNADLWVCCSLHIKAIADRMGYTKIIEKAGGKVVKDTCMVVSPIEDLGYKRVATNSGKAAVYLPSFCKSEVIFGDIEELLKGR</sequence>